<keyword id="KW-0997">Cell inner membrane</keyword>
<keyword id="KW-1003">Cell membrane</keyword>
<keyword id="KW-0375">Hydrogen ion transport</keyword>
<keyword id="KW-0406">Ion transport</keyword>
<keyword id="KW-0472">Membrane</keyword>
<keyword id="KW-1185">Reference proteome</keyword>
<keyword id="KW-0812">Transmembrane</keyword>
<keyword id="KW-1133">Transmembrane helix</keyword>
<keyword id="KW-0813">Transport</keyword>
<organism>
    <name type="scientific">Thermosynechococcus vestitus (strain NIES-2133 / IAM M-273 / BP-1)</name>
    <dbReference type="NCBI Taxonomy" id="197221"/>
    <lineage>
        <taxon>Bacteria</taxon>
        <taxon>Bacillati</taxon>
        <taxon>Cyanobacteriota</taxon>
        <taxon>Cyanophyceae</taxon>
        <taxon>Acaryochloridales</taxon>
        <taxon>Thermosynechococcaceae</taxon>
        <taxon>Thermosynechococcus</taxon>
    </lineage>
</organism>
<accession>P59112</accession>
<sequence>MSSNPFIGLRNWIRGAQQWYLTTPKRALQEAYEAALKIRAIELEHFDGQPISPLNLPVGEVSSYFETELKQLLKTIRMRMMEFRASRQILPLAPFQSPPTPVNEGINGATETYTVTATVSSTTAEPSVYEKLRVIDATLNRYKRQREKELDALARPSLSRQDPQQRQQAAALDKIAEDSLYLSEYISDDLTSDSKLDSSSFIPRSILRTADRFRRELNSDEATEAEVVRDFRTSKLRTRLAVRFMLLLVILPLLTQQISKALIVSPLVNHFKAVGQIERIINSQLEDNILDELARFENKIRFESLVSNVPIAPEEIQNRIREKAIELSTEYQKELIEPLKNILSDALGFTVFLALVFTGQRQLAIVKTFLDEVVYGLSDSAKAFMIILFTDVFVGFHSPHGWEVLVNNTLEHFGFPRNEDFINMFIATFPVMLDTVFKYWIFRYLNQISPSAVATYKNMNE</sequence>
<comment type="function">
    <text evidence="1">Required for H(+) efflux immediately after light irradiation to form a rapid H(+) concentration gradient across the thylakoid membranes. Together with PxcL, contributes to transient H(+) uptake following dark to light transition.</text>
</comment>
<comment type="subcellular location">
    <subcellularLocation>
        <location evidence="1">Cell inner membrane</location>
        <topology evidence="1">Multi-pass membrane protein</topology>
    </subcellularLocation>
</comment>
<comment type="similarity">
    <text evidence="1">Belongs to the CemA family.</text>
</comment>
<gene>
    <name evidence="1" type="primary">pxcA</name>
    <name type="ordered locus">tll0748</name>
</gene>
<feature type="chain" id="PRO_0000216669" description="Proton extrusion protein PxcA">
    <location>
        <begin position="1"/>
        <end position="461"/>
    </location>
</feature>
<feature type="transmembrane region" description="Helical" evidence="1">
    <location>
        <begin position="244"/>
        <end position="264"/>
    </location>
</feature>
<feature type="transmembrane region" description="Helical" evidence="1">
    <location>
        <begin position="339"/>
        <end position="359"/>
    </location>
</feature>
<feature type="transmembrane region" description="Helical" evidence="1">
    <location>
        <begin position="386"/>
        <end position="406"/>
    </location>
</feature>
<feature type="transmembrane region" description="Helical" evidence="1">
    <location>
        <begin position="421"/>
        <end position="441"/>
    </location>
</feature>
<evidence type="ECO:0000255" key="1">
    <source>
        <dbReference type="HAMAP-Rule" id="MF_01308"/>
    </source>
</evidence>
<reference key="1">
    <citation type="journal article" date="2002" name="DNA Res.">
        <title>Complete genome structure of the thermophilic cyanobacterium Thermosynechococcus elongatus BP-1.</title>
        <authorList>
            <person name="Nakamura Y."/>
            <person name="Kaneko T."/>
            <person name="Sato S."/>
            <person name="Ikeuchi M."/>
            <person name="Katoh H."/>
            <person name="Sasamoto S."/>
            <person name="Watanabe A."/>
            <person name="Iriguchi M."/>
            <person name="Kawashima K."/>
            <person name="Kimura T."/>
            <person name="Kishida Y."/>
            <person name="Kiyokawa C."/>
            <person name="Kohara M."/>
            <person name="Matsumoto M."/>
            <person name="Matsuno A."/>
            <person name="Nakazaki N."/>
            <person name="Shimpo S."/>
            <person name="Sugimoto M."/>
            <person name="Takeuchi C."/>
            <person name="Yamada M."/>
            <person name="Tabata S."/>
        </authorList>
    </citation>
    <scope>NUCLEOTIDE SEQUENCE [LARGE SCALE GENOMIC DNA]</scope>
    <source>
        <strain>NIES-2133 / IAM M-273 / BP-1</strain>
    </source>
</reference>
<name>PXCA_THEVB</name>
<dbReference type="EMBL" id="BA000039">
    <property type="protein sequence ID" value="BAC08299.1"/>
    <property type="molecule type" value="Genomic_DNA"/>
</dbReference>
<dbReference type="RefSeq" id="NP_681537.1">
    <property type="nucleotide sequence ID" value="NC_004113.1"/>
</dbReference>
<dbReference type="RefSeq" id="WP_011056595.1">
    <property type="nucleotide sequence ID" value="NC_004113.1"/>
</dbReference>
<dbReference type="STRING" id="197221.gene:10747339"/>
<dbReference type="EnsemblBacteria" id="BAC08299">
    <property type="protein sequence ID" value="BAC08299"/>
    <property type="gene ID" value="BAC08299"/>
</dbReference>
<dbReference type="KEGG" id="tel:tll0748"/>
<dbReference type="PATRIC" id="fig|197221.4.peg.788"/>
<dbReference type="eggNOG" id="ENOG502Z8DN">
    <property type="taxonomic scope" value="Bacteria"/>
</dbReference>
<dbReference type="Proteomes" id="UP000000440">
    <property type="component" value="Chromosome"/>
</dbReference>
<dbReference type="GO" id="GO:0005886">
    <property type="term" value="C:plasma membrane"/>
    <property type="evidence" value="ECO:0007669"/>
    <property type="project" value="UniProtKB-SubCell"/>
</dbReference>
<dbReference type="GO" id="GO:0015078">
    <property type="term" value="F:proton transmembrane transporter activity"/>
    <property type="evidence" value="ECO:0007669"/>
    <property type="project" value="UniProtKB-UniRule"/>
</dbReference>
<dbReference type="HAMAP" id="MF_01308">
    <property type="entry name" value="CemA_PxcA"/>
    <property type="match status" value="1"/>
</dbReference>
<dbReference type="InterPro" id="IPR004282">
    <property type="entry name" value="CemA"/>
</dbReference>
<dbReference type="NCBIfam" id="NF002706">
    <property type="entry name" value="PRK02507.1-5"/>
    <property type="match status" value="1"/>
</dbReference>
<dbReference type="PANTHER" id="PTHR33650:SF2">
    <property type="entry name" value="CHLOROPLAST ENVELOPE MEMBRANE PROTEIN"/>
    <property type="match status" value="1"/>
</dbReference>
<dbReference type="PANTHER" id="PTHR33650">
    <property type="entry name" value="CHLOROPLAST ENVELOPE MEMBRANE PROTEIN-RELATED"/>
    <property type="match status" value="1"/>
</dbReference>
<dbReference type="Pfam" id="PF03040">
    <property type="entry name" value="CemA"/>
    <property type="match status" value="1"/>
</dbReference>
<proteinExistence type="inferred from homology"/>
<protein>
    <recommendedName>
        <fullName evidence="1">Proton extrusion protein PxcA</fullName>
    </recommendedName>
</protein>